<keyword id="KW-0004">4Fe-4S</keyword>
<keyword id="KW-0963">Cytoplasm</keyword>
<keyword id="KW-0408">Iron</keyword>
<keyword id="KW-0411">Iron-sulfur</keyword>
<keyword id="KW-0479">Metal-binding</keyword>
<keyword id="KW-0662">Pyridine nucleotide biosynthesis</keyword>
<keyword id="KW-1185">Reference proteome</keyword>
<keyword id="KW-0808">Transferase</keyword>
<protein>
    <recommendedName>
        <fullName evidence="1">Quinolinate synthase</fullName>
        <ecNumber evidence="1">2.5.1.72</ecNumber>
    </recommendedName>
</protein>
<evidence type="ECO:0000255" key="1">
    <source>
        <dbReference type="HAMAP-Rule" id="MF_00569"/>
    </source>
</evidence>
<accession>O25910</accession>
<comment type="function">
    <text evidence="1">Catalyzes the condensation of iminoaspartate with dihydroxyacetone phosphate to form quinolinate.</text>
</comment>
<comment type="catalytic activity">
    <reaction evidence="1">
        <text>iminosuccinate + dihydroxyacetone phosphate = quinolinate + phosphate + 2 H2O + H(+)</text>
        <dbReference type="Rhea" id="RHEA:25888"/>
        <dbReference type="ChEBI" id="CHEBI:15377"/>
        <dbReference type="ChEBI" id="CHEBI:15378"/>
        <dbReference type="ChEBI" id="CHEBI:29959"/>
        <dbReference type="ChEBI" id="CHEBI:43474"/>
        <dbReference type="ChEBI" id="CHEBI:57642"/>
        <dbReference type="ChEBI" id="CHEBI:77875"/>
        <dbReference type="EC" id="2.5.1.72"/>
    </reaction>
    <physiologicalReaction direction="left-to-right" evidence="1">
        <dbReference type="Rhea" id="RHEA:25889"/>
    </physiologicalReaction>
</comment>
<comment type="cofactor">
    <cofactor evidence="1">
        <name>[4Fe-4S] cluster</name>
        <dbReference type="ChEBI" id="CHEBI:49883"/>
    </cofactor>
    <text evidence="1">Binds 1 [4Fe-4S] cluster per subunit.</text>
</comment>
<comment type="pathway">
    <text evidence="1">Cofactor biosynthesis; NAD(+) biosynthesis; quinolinate from iminoaspartate: step 1/1.</text>
</comment>
<comment type="subcellular location">
    <subcellularLocation>
        <location evidence="1">Cytoplasm</location>
    </subcellularLocation>
</comment>
<comment type="similarity">
    <text evidence="1">Belongs to the quinolinate synthase family. Type 3 subfamily.</text>
</comment>
<proteinExistence type="inferred from homology"/>
<feature type="chain" id="PRO_0000155818" description="Quinolinate synthase">
    <location>
        <begin position="1"/>
        <end position="336"/>
    </location>
</feature>
<feature type="binding site" evidence="1">
    <location>
        <position position="25"/>
    </location>
    <ligand>
        <name>iminosuccinate</name>
        <dbReference type="ChEBI" id="CHEBI:77875"/>
    </ligand>
</feature>
<feature type="binding site" evidence="1">
    <location>
        <position position="42"/>
    </location>
    <ligand>
        <name>iminosuccinate</name>
        <dbReference type="ChEBI" id="CHEBI:77875"/>
    </ligand>
</feature>
<feature type="binding site" evidence="1">
    <location>
        <position position="86"/>
    </location>
    <ligand>
        <name>[4Fe-4S] cluster</name>
        <dbReference type="ChEBI" id="CHEBI:49883"/>
    </ligand>
</feature>
<feature type="binding site" evidence="1">
    <location>
        <begin position="117"/>
        <end position="119"/>
    </location>
    <ligand>
        <name>iminosuccinate</name>
        <dbReference type="ChEBI" id="CHEBI:77875"/>
    </ligand>
</feature>
<feature type="binding site" evidence="1">
    <location>
        <position position="138"/>
    </location>
    <ligand>
        <name>iminosuccinate</name>
        <dbReference type="ChEBI" id="CHEBI:77875"/>
    </ligand>
</feature>
<feature type="binding site" evidence="1">
    <location>
        <position position="198"/>
    </location>
    <ligand>
        <name>[4Fe-4S] cluster</name>
        <dbReference type="ChEBI" id="CHEBI:49883"/>
    </ligand>
</feature>
<feature type="binding site" evidence="1">
    <location>
        <begin position="224"/>
        <end position="226"/>
    </location>
    <ligand>
        <name>iminosuccinate</name>
        <dbReference type="ChEBI" id="CHEBI:77875"/>
    </ligand>
</feature>
<feature type="binding site" evidence="1">
    <location>
        <position position="241"/>
    </location>
    <ligand>
        <name>iminosuccinate</name>
        <dbReference type="ChEBI" id="CHEBI:77875"/>
    </ligand>
</feature>
<feature type="binding site" evidence="1">
    <location>
        <position position="288"/>
    </location>
    <ligand>
        <name>[4Fe-4S] cluster</name>
        <dbReference type="ChEBI" id="CHEBI:49883"/>
    </ligand>
</feature>
<sequence length="336" mass="37813">MPTDNDLKAAILELLRDLDVLLVAHFYQKDEIVELAHYTGDSLELAKIASQSDKNLIVFCGVHFMGESVKALAFDKQVIMPKLSCCSMARMIDSHYYDRSVHLLKECGVKEFYPITYINSNAEVKAKVAKDDGVVCTSRNASKIFNHALKQNKKIFFLPDKCLGENLALENGLKSAILGANSQEEIKNADVVCYNGFCSVHQLFKLEDIEFYRQKYPDILIAVHPECEPSVVSNADFSGSTSQIIEFVEKLSPNQKVAIGTESHLVNRLKAKRHHQNTFILSSTLALCPTMNETTLKDLFEVLKAYKNHRAYNTIELKDEVARLAKLALTKMMELS</sequence>
<gene>
    <name evidence="1" type="primary">nadA</name>
    <name type="ordered locus">HP_1356</name>
</gene>
<organism>
    <name type="scientific">Helicobacter pylori (strain ATCC 700392 / 26695)</name>
    <name type="common">Campylobacter pylori</name>
    <dbReference type="NCBI Taxonomy" id="85962"/>
    <lineage>
        <taxon>Bacteria</taxon>
        <taxon>Pseudomonadati</taxon>
        <taxon>Campylobacterota</taxon>
        <taxon>Epsilonproteobacteria</taxon>
        <taxon>Campylobacterales</taxon>
        <taxon>Helicobacteraceae</taxon>
        <taxon>Helicobacter</taxon>
    </lineage>
</organism>
<dbReference type="EC" id="2.5.1.72" evidence="1"/>
<dbReference type="EMBL" id="AE000511">
    <property type="protein sequence ID" value="AAD08398.1"/>
    <property type="molecule type" value="Genomic_DNA"/>
</dbReference>
<dbReference type="PIR" id="D64689">
    <property type="entry name" value="D64689"/>
</dbReference>
<dbReference type="RefSeq" id="NP_208148.1">
    <property type="nucleotide sequence ID" value="NC_000915.1"/>
</dbReference>
<dbReference type="RefSeq" id="WP_001141770.1">
    <property type="nucleotide sequence ID" value="NC_018939.1"/>
</dbReference>
<dbReference type="SMR" id="O25910"/>
<dbReference type="DIP" id="DIP-3397N"/>
<dbReference type="FunCoup" id="O25910">
    <property type="interactions" value="335"/>
</dbReference>
<dbReference type="IntAct" id="O25910">
    <property type="interactions" value="1"/>
</dbReference>
<dbReference type="MINT" id="O25910"/>
<dbReference type="STRING" id="85962.HP_1356"/>
<dbReference type="PaxDb" id="85962-C694_07000"/>
<dbReference type="DNASU" id="900347"/>
<dbReference type="EnsemblBacteria" id="AAD08398">
    <property type="protein sequence ID" value="AAD08398"/>
    <property type="gene ID" value="HP_1356"/>
</dbReference>
<dbReference type="KEGG" id="heo:C694_07000"/>
<dbReference type="KEGG" id="hpy:HP_1356"/>
<dbReference type="PATRIC" id="fig|85962.47.peg.1452"/>
<dbReference type="eggNOG" id="COG0379">
    <property type="taxonomic scope" value="Bacteria"/>
</dbReference>
<dbReference type="InParanoid" id="O25910"/>
<dbReference type="OrthoDB" id="9801204at2"/>
<dbReference type="PhylomeDB" id="O25910"/>
<dbReference type="UniPathway" id="UPA00253">
    <property type="reaction ID" value="UER00327"/>
</dbReference>
<dbReference type="Proteomes" id="UP000000429">
    <property type="component" value="Chromosome"/>
</dbReference>
<dbReference type="GO" id="GO:0005829">
    <property type="term" value="C:cytosol"/>
    <property type="evidence" value="ECO:0000318"/>
    <property type="project" value="GO_Central"/>
</dbReference>
<dbReference type="GO" id="GO:0051539">
    <property type="term" value="F:4 iron, 4 sulfur cluster binding"/>
    <property type="evidence" value="ECO:0000318"/>
    <property type="project" value="GO_Central"/>
</dbReference>
<dbReference type="GO" id="GO:0046872">
    <property type="term" value="F:metal ion binding"/>
    <property type="evidence" value="ECO:0007669"/>
    <property type="project" value="UniProtKB-KW"/>
</dbReference>
<dbReference type="GO" id="GO:0008987">
    <property type="term" value="F:quinolinate synthetase A activity"/>
    <property type="evidence" value="ECO:0000318"/>
    <property type="project" value="GO_Central"/>
</dbReference>
<dbReference type="GO" id="GO:0034628">
    <property type="term" value="P:'de novo' NAD biosynthetic process from L-aspartate"/>
    <property type="evidence" value="ECO:0000318"/>
    <property type="project" value="GO_Central"/>
</dbReference>
<dbReference type="FunFam" id="3.40.50.10800:FF:000001">
    <property type="entry name" value="Quinolinate synthase A"/>
    <property type="match status" value="1"/>
</dbReference>
<dbReference type="Gene3D" id="3.40.50.10800">
    <property type="entry name" value="NadA-like"/>
    <property type="match status" value="3"/>
</dbReference>
<dbReference type="HAMAP" id="MF_00569">
    <property type="entry name" value="NadA_type3"/>
    <property type="match status" value="1"/>
</dbReference>
<dbReference type="InterPro" id="IPR003473">
    <property type="entry name" value="NadA"/>
</dbReference>
<dbReference type="InterPro" id="IPR036094">
    <property type="entry name" value="NadA_sf"/>
</dbReference>
<dbReference type="InterPro" id="IPR023515">
    <property type="entry name" value="Quinolinate_synth_A_type3"/>
</dbReference>
<dbReference type="NCBIfam" id="TIGR00550">
    <property type="entry name" value="nadA"/>
    <property type="match status" value="1"/>
</dbReference>
<dbReference type="NCBIfam" id="NF006885">
    <property type="entry name" value="PRK09375.2-6"/>
    <property type="match status" value="1"/>
</dbReference>
<dbReference type="PANTHER" id="PTHR30573:SF0">
    <property type="entry name" value="QUINOLINATE SYNTHASE, CHLOROPLASTIC"/>
    <property type="match status" value="1"/>
</dbReference>
<dbReference type="PANTHER" id="PTHR30573">
    <property type="entry name" value="QUINOLINATE SYNTHETASE A"/>
    <property type="match status" value="1"/>
</dbReference>
<dbReference type="Pfam" id="PF02445">
    <property type="entry name" value="NadA"/>
    <property type="match status" value="1"/>
</dbReference>
<dbReference type="SUPFAM" id="SSF142754">
    <property type="entry name" value="NadA-like"/>
    <property type="match status" value="1"/>
</dbReference>
<name>NADA_HELPY</name>
<reference key="1">
    <citation type="journal article" date="1997" name="Nature">
        <title>The complete genome sequence of the gastric pathogen Helicobacter pylori.</title>
        <authorList>
            <person name="Tomb J.-F."/>
            <person name="White O."/>
            <person name="Kerlavage A.R."/>
            <person name="Clayton R.A."/>
            <person name="Sutton G.G."/>
            <person name="Fleischmann R.D."/>
            <person name="Ketchum K.A."/>
            <person name="Klenk H.-P."/>
            <person name="Gill S.R."/>
            <person name="Dougherty B.A."/>
            <person name="Nelson K.E."/>
            <person name="Quackenbush J."/>
            <person name="Zhou L."/>
            <person name="Kirkness E.F."/>
            <person name="Peterson S.N."/>
            <person name="Loftus B.J."/>
            <person name="Richardson D.L."/>
            <person name="Dodson R.J."/>
            <person name="Khalak H.G."/>
            <person name="Glodek A."/>
            <person name="McKenney K."/>
            <person name="FitzGerald L.M."/>
            <person name="Lee N."/>
            <person name="Adams M.D."/>
            <person name="Hickey E.K."/>
            <person name="Berg D.E."/>
            <person name="Gocayne J.D."/>
            <person name="Utterback T.R."/>
            <person name="Peterson J.D."/>
            <person name="Kelley J.M."/>
            <person name="Cotton M.D."/>
            <person name="Weidman J.F."/>
            <person name="Fujii C."/>
            <person name="Bowman C."/>
            <person name="Watthey L."/>
            <person name="Wallin E."/>
            <person name="Hayes W.S."/>
            <person name="Borodovsky M."/>
            <person name="Karp P.D."/>
            <person name="Smith H.O."/>
            <person name="Fraser C.M."/>
            <person name="Venter J.C."/>
        </authorList>
    </citation>
    <scope>NUCLEOTIDE SEQUENCE [LARGE SCALE GENOMIC DNA]</scope>
    <source>
        <strain>ATCC 700392 / 26695</strain>
    </source>
</reference>